<accession>Q925X7</accession>
<evidence type="ECO:0000255" key="1">
    <source>
        <dbReference type="HAMAP-Rule" id="MF_01315"/>
    </source>
</evidence>
<evidence type="ECO:0000256" key="2">
    <source>
        <dbReference type="SAM" id="MobiDB-lite"/>
    </source>
</evidence>
<evidence type="ECO:0000305" key="3"/>
<gene>
    <name evidence="1" type="primary">rpsM</name>
    <name type="ordered locus">R01378</name>
    <name type="ORF">SMc01287</name>
</gene>
<name>RS13_RHIME</name>
<keyword id="KW-1185">Reference proteome</keyword>
<keyword id="KW-0687">Ribonucleoprotein</keyword>
<keyword id="KW-0689">Ribosomal protein</keyword>
<keyword id="KW-0694">RNA-binding</keyword>
<keyword id="KW-0699">rRNA-binding</keyword>
<keyword id="KW-0820">tRNA-binding</keyword>
<dbReference type="EMBL" id="AL591688">
    <property type="protein sequence ID" value="CAC45957.1"/>
    <property type="molecule type" value="Genomic_DNA"/>
</dbReference>
<dbReference type="EMBL" id="AF317474">
    <property type="protein sequence ID" value="AAL26899.1"/>
    <property type="molecule type" value="Genomic_DNA"/>
</dbReference>
<dbReference type="RefSeq" id="NP_385484.1">
    <property type="nucleotide sequence ID" value="NC_003047.1"/>
</dbReference>
<dbReference type="RefSeq" id="WP_003536498.1">
    <property type="nucleotide sequence ID" value="NC_003047.1"/>
</dbReference>
<dbReference type="SMR" id="Q925X7"/>
<dbReference type="EnsemblBacteria" id="CAC45957">
    <property type="protein sequence ID" value="CAC45957"/>
    <property type="gene ID" value="SMc01287"/>
</dbReference>
<dbReference type="GeneID" id="89575702"/>
<dbReference type="KEGG" id="sme:SMc01287"/>
<dbReference type="PATRIC" id="fig|266834.11.peg.2795"/>
<dbReference type="eggNOG" id="COG0099">
    <property type="taxonomic scope" value="Bacteria"/>
</dbReference>
<dbReference type="HOGENOM" id="CLU_103849_1_2_5"/>
<dbReference type="OrthoDB" id="9803610at2"/>
<dbReference type="Proteomes" id="UP000001976">
    <property type="component" value="Chromosome"/>
</dbReference>
<dbReference type="GO" id="GO:0005829">
    <property type="term" value="C:cytosol"/>
    <property type="evidence" value="ECO:0007669"/>
    <property type="project" value="TreeGrafter"/>
</dbReference>
<dbReference type="GO" id="GO:0015935">
    <property type="term" value="C:small ribosomal subunit"/>
    <property type="evidence" value="ECO:0007669"/>
    <property type="project" value="TreeGrafter"/>
</dbReference>
<dbReference type="GO" id="GO:0019843">
    <property type="term" value="F:rRNA binding"/>
    <property type="evidence" value="ECO:0007669"/>
    <property type="project" value="UniProtKB-UniRule"/>
</dbReference>
<dbReference type="GO" id="GO:0003735">
    <property type="term" value="F:structural constituent of ribosome"/>
    <property type="evidence" value="ECO:0007669"/>
    <property type="project" value="InterPro"/>
</dbReference>
<dbReference type="GO" id="GO:0000049">
    <property type="term" value="F:tRNA binding"/>
    <property type="evidence" value="ECO:0007669"/>
    <property type="project" value="UniProtKB-UniRule"/>
</dbReference>
<dbReference type="GO" id="GO:0006412">
    <property type="term" value="P:translation"/>
    <property type="evidence" value="ECO:0007669"/>
    <property type="project" value="UniProtKB-UniRule"/>
</dbReference>
<dbReference type="FunFam" id="1.10.8.50:FF:000001">
    <property type="entry name" value="30S ribosomal protein S13"/>
    <property type="match status" value="1"/>
</dbReference>
<dbReference type="FunFam" id="4.10.910.10:FF:000001">
    <property type="entry name" value="30S ribosomal protein S13"/>
    <property type="match status" value="1"/>
</dbReference>
<dbReference type="Gene3D" id="1.10.8.50">
    <property type="match status" value="1"/>
</dbReference>
<dbReference type="Gene3D" id="4.10.910.10">
    <property type="entry name" value="30s ribosomal protein s13, domain 2"/>
    <property type="match status" value="1"/>
</dbReference>
<dbReference type="HAMAP" id="MF_01315">
    <property type="entry name" value="Ribosomal_uS13"/>
    <property type="match status" value="1"/>
</dbReference>
<dbReference type="InterPro" id="IPR027437">
    <property type="entry name" value="Rbsml_uS13_C"/>
</dbReference>
<dbReference type="InterPro" id="IPR001892">
    <property type="entry name" value="Ribosomal_uS13"/>
</dbReference>
<dbReference type="InterPro" id="IPR010979">
    <property type="entry name" value="Ribosomal_uS13-like_H2TH"/>
</dbReference>
<dbReference type="InterPro" id="IPR019980">
    <property type="entry name" value="Ribosomal_uS13_bac-type"/>
</dbReference>
<dbReference type="InterPro" id="IPR018269">
    <property type="entry name" value="Ribosomal_uS13_CS"/>
</dbReference>
<dbReference type="NCBIfam" id="TIGR03631">
    <property type="entry name" value="uS13_bact"/>
    <property type="match status" value="1"/>
</dbReference>
<dbReference type="PANTHER" id="PTHR10871">
    <property type="entry name" value="30S RIBOSOMAL PROTEIN S13/40S RIBOSOMAL PROTEIN S18"/>
    <property type="match status" value="1"/>
</dbReference>
<dbReference type="PANTHER" id="PTHR10871:SF1">
    <property type="entry name" value="SMALL RIBOSOMAL SUBUNIT PROTEIN US13M"/>
    <property type="match status" value="1"/>
</dbReference>
<dbReference type="Pfam" id="PF00416">
    <property type="entry name" value="Ribosomal_S13"/>
    <property type="match status" value="1"/>
</dbReference>
<dbReference type="PIRSF" id="PIRSF002134">
    <property type="entry name" value="Ribosomal_S13"/>
    <property type="match status" value="1"/>
</dbReference>
<dbReference type="SUPFAM" id="SSF46946">
    <property type="entry name" value="S13-like H2TH domain"/>
    <property type="match status" value="1"/>
</dbReference>
<dbReference type="PROSITE" id="PS00646">
    <property type="entry name" value="RIBOSOMAL_S13_1"/>
    <property type="match status" value="1"/>
</dbReference>
<dbReference type="PROSITE" id="PS50159">
    <property type="entry name" value="RIBOSOMAL_S13_2"/>
    <property type="match status" value="1"/>
</dbReference>
<proteinExistence type="inferred from homology"/>
<comment type="function">
    <text evidence="1">Located at the top of the head of the 30S subunit, it contacts several helices of the 16S rRNA. In the 70S ribosome it contacts the 23S rRNA (bridge B1a) and protein L5 of the 50S subunit (bridge B1b), connecting the 2 subunits; these bridges are implicated in subunit movement. Contacts the tRNAs in the A and P-sites.</text>
</comment>
<comment type="subunit">
    <text evidence="1">Part of the 30S ribosomal subunit. Forms a loose heterodimer with protein S19. Forms two bridges to the 50S subunit in the 70S ribosome.</text>
</comment>
<comment type="similarity">
    <text evidence="1">Belongs to the universal ribosomal protein uS13 family.</text>
</comment>
<reference key="1">
    <citation type="journal article" date="2001" name="Proc. Natl. Acad. Sci. U.S.A.">
        <title>Analysis of the chromosome sequence of the legume symbiont Sinorhizobium meliloti strain 1021.</title>
        <authorList>
            <person name="Capela D."/>
            <person name="Barloy-Hubler F."/>
            <person name="Gouzy J."/>
            <person name="Bothe G."/>
            <person name="Ampe F."/>
            <person name="Batut J."/>
            <person name="Boistard P."/>
            <person name="Becker A."/>
            <person name="Boutry M."/>
            <person name="Cadieu E."/>
            <person name="Dreano S."/>
            <person name="Gloux S."/>
            <person name="Godrie T."/>
            <person name="Goffeau A."/>
            <person name="Kahn D."/>
            <person name="Kiss E."/>
            <person name="Lelaure V."/>
            <person name="Masuy D."/>
            <person name="Pohl T."/>
            <person name="Portetelle D."/>
            <person name="Puehler A."/>
            <person name="Purnelle B."/>
            <person name="Ramsperger U."/>
            <person name="Renard C."/>
            <person name="Thebault P."/>
            <person name="Vandenbol M."/>
            <person name="Weidner S."/>
            <person name="Galibert F."/>
        </authorList>
    </citation>
    <scope>NUCLEOTIDE SEQUENCE [LARGE SCALE GENOMIC DNA]</scope>
    <source>
        <strain>1021</strain>
    </source>
</reference>
<reference key="2">
    <citation type="submission" date="2000-10" db="EMBL/GenBank/DDBJ databases">
        <title>Isolation and Characterization of RpoA from Rhizobium meliloti.</title>
        <authorList>
            <person name="Peck M.C."/>
            <person name="Fisher R.F."/>
            <person name="Long S.R."/>
        </authorList>
    </citation>
    <scope>NUCLEOTIDE SEQUENCE [GENOMIC DNA]</scope>
    <source>
        <strain>1021</strain>
    </source>
</reference>
<reference key="3">
    <citation type="journal article" date="2001" name="Science">
        <title>The composite genome of the legume symbiont Sinorhizobium meliloti.</title>
        <authorList>
            <person name="Galibert F."/>
            <person name="Finan T.M."/>
            <person name="Long S.R."/>
            <person name="Puehler A."/>
            <person name="Abola P."/>
            <person name="Ampe F."/>
            <person name="Barloy-Hubler F."/>
            <person name="Barnett M.J."/>
            <person name="Becker A."/>
            <person name="Boistard P."/>
            <person name="Bothe G."/>
            <person name="Boutry M."/>
            <person name="Bowser L."/>
            <person name="Buhrmester J."/>
            <person name="Cadieu E."/>
            <person name="Capela D."/>
            <person name="Chain P."/>
            <person name="Cowie A."/>
            <person name="Davis R.W."/>
            <person name="Dreano S."/>
            <person name="Federspiel N.A."/>
            <person name="Fisher R.F."/>
            <person name="Gloux S."/>
            <person name="Godrie T."/>
            <person name="Goffeau A."/>
            <person name="Golding B."/>
            <person name="Gouzy J."/>
            <person name="Gurjal M."/>
            <person name="Hernandez-Lucas I."/>
            <person name="Hong A."/>
            <person name="Huizar L."/>
            <person name="Hyman R.W."/>
            <person name="Jones T."/>
            <person name="Kahn D."/>
            <person name="Kahn M.L."/>
            <person name="Kalman S."/>
            <person name="Keating D.H."/>
            <person name="Kiss E."/>
            <person name="Komp C."/>
            <person name="Lelaure V."/>
            <person name="Masuy D."/>
            <person name="Palm C."/>
            <person name="Peck M.C."/>
            <person name="Pohl T.M."/>
            <person name="Portetelle D."/>
            <person name="Purnelle B."/>
            <person name="Ramsperger U."/>
            <person name="Surzycki R."/>
            <person name="Thebault P."/>
            <person name="Vandenbol M."/>
            <person name="Vorhoelter F.J."/>
            <person name="Weidner S."/>
            <person name="Wells D.H."/>
            <person name="Wong K."/>
            <person name="Yeh K.-C."/>
            <person name="Batut J."/>
        </authorList>
    </citation>
    <scope>NUCLEOTIDE SEQUENCE [LARGE SCALE GENOMIC DNA]</scope>
    <source>
        <strain>1021</strain>
    </source>
</reference>
<sequence>MARIAGVNIPTAKRVVIALTYIHGIGTKFAQEIIEKVGIPAERRVHQLTDAEVLQIRETIDRDYQVEGDLRRETSMNIKRLMDLGCYRGLRHRRGLPVRGQRTHTNARTRKGPAKAIAGKKK</sequence>
<organism>
    <name type="scientific">Rhizobium meliloti (strain 1021)</name>
    <name type="common">Ensifer meliloti</name>
    <name type="synonym">Sinorhizobium meliloti</name>
    <dbReference type="NCBI Taxonomy" id="266834"/>
    <lineage>
        <taxon>Bacteria</taxon>
        <taxon>Pseudomonadati</taxon>
        <taxon>Pseudomonadota</taxon>
        <taxon>Alphaproteobacteria</taxon>
        <taxon>Hyphomicrobiales</taxon>
        <taxon>Rhizobiaceae</taxon>
        <taxon>Sinorhizobium/Ensifer group</taxon>
        <taxon>Sinorhizobium</taxon>
    </lineage>
</organism>
<protein>
    <recommendedName>
        <fullName evidence="1">Small ribosomal subunit protein uS13</fullName>
    </recommendedName>
    <alternativeName>
        <fullName evidence="3">30S ribosomal protein S13</fullName>
    </alternativeName>
</protein>
<feature type="chain" id="PRO_0000132126" description="Small ribosomal subunit protein uS13">
    <location>
        <begin position="1"/>
        <end position="122"/>
    </location>
</feature>
<feature type="region of interest" description="Disordered" evidence="2">
    <location>
        <begin position="99"/>
        <end position="122"/>
    </location>
</feature>